<evidence type="ECO:0000255" key="1">
    <source>
        <dbReference type="HAMAP-Rule" id="MF_01337"/>
    </source>
</evidence>
<evidence type="ECO:0000305" key="2"/>
<feature type="chain" id="PRO_1000142728" description="Large ribosomal subunit protein uL18">
    <location>
        <begin position="1"/>
        <end position="122"/>
    </location>
</feature>
<sequence>MIKKENRNWRRKKRHLSIRKKIHGTADRPRLCVYKSEKHIYAQIIDDDKGHTLVAASTLDKELRETLKKTWNKEAAREVGKLIGKRAIEKGIKKVVFDRGGYRYHGRVAELAEGAREAGLEF</sequence>
<name>RL18_THEAB</name>
<proteinExistence type="inferred from homology"/>
<gene>
    <name evidence="1" type="primary">rplR</name>
    <name type="ordered locus">THA_1231</name>
</gene>
<reference key="1">
    <citation type="journal article" date="2009" name="J. Bacteriol.">
        <title>The genome of Thermosipho africanus TCF52B: lateral genetic connections to the Firmicutes and Archaea.</title>
        <authorList>
            <person name="Nesboe C.L."/>
            <person name="Bapteste E."/>
            <person name="Curtis B."/>
            <person name="Dahle H."/>
            <person name="Lopez P."/>
            <person name="Macleod D."/>
            <person name="Dlutek M."/>
            <person name="Bowman S."/>
            <person name="Zhaxybayeva O."/>
            <person name="Birkeland N.-K."/>
            <person name="Doolittle W.F."/>
        </authorList>
    </citation>
    <scope>NUCLEOTIDE SEQUENCE [LARGE SCALE GENOMIC DNA]</scope>
    <source>
        <strain>TCF52B</strain>
    </source>
</reference>
<comment type="function">
    <text evidence="1">This is one of the proteins that bind and probably mediate the attachment of the 5S RNA into the large ribosomal subunit, where it forms part of the central protuberance.</text>
</comment>
<comment type="subunit">
    <text evidence="1">Part of the 50S ribosomal subunit; part of the 5S rRNA/L5/L18/L25 subcomplex. Contacts the 5S and 23S rRNAs.</text>
</comment>
<comment type="similarity">
    <text evidence="1">Belongs to the universal ribosomal protein uL18 family.</text>
</comment>
<keyword id="KW-1185">Reference proteome</keyword>
<keyword id="KW-0687">Ribonucleoprotein</keyword>
<keyword id="KW-0689">Ribosomal protein</keyword>
<keyword id="KW-0694">RNA-binding</keyword>
<keyword id="KW-0699">rRNA-binding</keyword>
<protein>
    <recommendedName>
        <fullName evidence="1">Large ribosomal subunit protein uL18</fullName>
    </recommendedName>
    <alternativeName>
        <fullName evidence="2">50S ribosomal protein L18</fullName>
    </alternativeName>
</protein>
<accession>B7IHW2</accession>
<dbReference type="EMBL" id="CP001185">
    <property type="protein sequence ID" value="ACJ75676.1"/>
    <property type="molecule type" value="Genomic_DNA"/>
</dbReference>
<dbReference type="RefSeq" id="WP_004101467.1">
    <property type="nucleotide sequence ID" value="NC_011653.1"/>
</dbReference>
<dbReference type="SMR" id="B7IHW2"/>
<dbReference type="STRING" id="484019.THA_1231"/>
<dbReference type="KEGG" id="taf:THA_1231"/>
<dbReference type="eggNOG" id="COG0256">
    <property type="taxonomic scope" value="Bacteria"/>
</dbReference>
<dbReference type="HOGENOM" id="CLU_098841_0_1_0"/>
<dbReference type="OrthoDB" id="9810939at2"/>
<dbReference type="Proteomes" id="UP000002453">
    <property type="component" value="Chromosome"/>
</dbReference>
<dbReference type="GO" id="GO:0022625">
    <property type="term" value="C:cytosolic large ribosomal subunit"/>
    <property type="evidence" value="ECO:0007669"/>
    <property type="project" value="TreeGrafter"/>
</dbReference>
<dbReference type="GO" id="GO:0008097">
    <property type="term" value="F:5S rRNA binding"/>
    <property type="evidence" value="ECO:0007669"/>
    <property type="project" value="TreeGrafter"/>
</dbReference>
<dbReference type="GO" id="GO:0003735">
    <property type="term" value="F:structural constituent of ribosome"/>
    <property type="evidence" value="ECO:0007669"/>
    <property type="project" value="InterPro"/>
</dbReference>
<dbReference type="GO" id="GO:0006412">
    <property type="term" value="P:translation"/>
    <property type="evidence" value="ECO:0007669"/>
    <property type="project" value="UniProtKB-UniRule"/>
</dbReference>
<dbReference type="CDD" id="cd00432">
    <property type="entry name" value="Ribosomal_L18_L5e"/>
    <property type="match status" value="1"/>
</dbReference>
<dbReference type="FunFam" id="3.30.420.100:FF:000001">
    <property type="entry name" value="50S ribosomal protein L18"/>
    <property type="match status" value="1"/>
</dbReference>
<dbReference type="Gene3D" id="3.30.420.100">
    <property type="match status" value="1"/>
</dbReference>
<dbReference type="HAMAP" id="MF_01337_B">
    <property type="entry name" value="Ribosomal_uL18_B"/>
    <property type="match status" value="1"/>
</dbReference>
<dbReference type="InterPro" id="IPR004389">
    <property type="entry name" value="Ribosomal_uL18_bac-type"/>
</dbReference>
<dbReference type="InterPro" id="IPR005484">
    <property type="entry name" value="Ribosomal_uL18_bac/euk"/>
</dbReference>
<dbReference type="NCBIfam" id="TIGR00060">
    <property type="entry name" value="L18_bact"/>
    <property type="match status" value="1"/>
</dbReference>
<dbReference type="PANTHER" id="PTHR12899">
    <property type="entry name" value="39S RIBOSOMAL PROTEIN L18, MITOCHONDRIAL"/>
    <property type="match status" value="1"/>
</dbReference>
<dbReference type="PANTHER" id="PTHR12899:SF3">
    <property type="entry name" value="LARGE RIBOSOMAL SUBUNIT PROTEIN UL18M"/>
    <property type="match status" value="1"/>
</dbReference>
<dbReference type="Pfam" id="PF00861">
    <property type="entry name" value="Ribosomal_L18p"/>
    <property type="match status" value="1"/>
</dbReference>
<dbReference type="SUPFAM" id="SSF53137">
    <property type="entry name" value="Translational machinery components"/>
    <property type="match status" value="1"/>
</dbReference>
<organism>
    <name type="scientific">Thermosipho africanus (strain TCF52B)</name>
    <dbReference type="NCBI Taxonomy" id="484019"/>
    <lineage>
        <taxon>Bacteria</taxon>
        <taxon>Thermotogati</taxon>
        <taxon>Thermotogota</taxon>
        <taxon>Thermotogae</taxon>
        <taxon>Thermotogales</taxon>
        <taxon>Fervidobacteriaceae</taxon>
        <taxon>Thermosipho</taxon>
    </lineage>
</organism>